<dbReference type="EMBL" id="BC107542">
    <property type="protein sequence ID" value="AAI07543.1"/>
    <property type="molecule type" value="mRNA"/>
</dbReference>
<dbReference type="RefSeq" id="NP_001030471.1">
    <property type="nucleotide sequence ID" value="NM_001035394.1"/>
</dbReference>
<dbReference type="SMR" id="Q3B7M5"/>
<dbReference type="FunCoup" id="Q3B7M5">
    <property type="interactions" value="1731"/>
</dbReference>
<dbReference type="STRING" id="9913.ENSBTAP00000040793"/>
<dbReference type="PaxDb" id="9913-ENSBTAP00000040793"/>
<dbReference type="PeptideAtlas" id="Q3B7M5"/>
<dbReference type="Ensembl" id="ENSBTAT00000043205.3">
    <property type="protein sequence ID" value="ENSBTAP00000040793.2"/>
    <property type="gene ID" value="ENSBTAG00000030587.5"/>
</dbReference>
<dbReference type="GeneID" id="532851"/>
<dbReference type="KEGG" id="bta:532851"/>
<dbReference type="CTD" id="3927"/>
<dbReference type="VEuPathDB" id="HostDB:ENSBTAG00000030587"/>
<dbReference type="VGNC" id="VGNC:30798">
    <property type="gene designation" value="LASP1"/>
</dbReference>
<dbReference type="eggNOG" id="KOG1702">
    <property type="taxonomic scope" value="Eukaryota"/>
</dbReference>
<dbReference type="GeneTree" id="ENSGT00940000154775"/>
<dbReference type="HOGENOM" id="CLU_026811_0_1_1"/>
<dbReference type="InParanoid" id="Q3B7M5"/>
<dbReference type="OMA" id="TPVYHHQ"/>
<dbReference type="OrthoDB" id="191061at2759"/>
<dbReference type="TreeFam" id="TF319104"/>
<dbReference type="Proteomes" id="UP000009136">
    <property type="component" value="Chromosome 19"/>
</dbReference>
<dbReference type="Bgee" id="ENSBTAG00000030587">
    <property type="expression patterns" value="Expressed in omental fat pad and 106 other cell types or tissues"/>
</dbReference>
<dbReference type="GO" id="GO:0005938">
    <property type="term" value="C:cell cortex"/>
    <property type="evidence" value="ECO:0007669"/>
    <property type="project" value="UniProtKB-SubCell"/>
</dbReference>
<dbReference type="GO" id="GO:0005856">
    <property type="term" value="C:cytoskeleton"/>
    <property type="evidence" value="ECO:0007669"/>
    <property type="project" value="UniProtKB-SubCell"/>
</dbReference>
<dbReference type="GO" id="GO:0005925">
    <property type="term" value="C:focal adhesion"/>
    <property type="evidence" value="ECO:0000318"/>
    <property type="project" value="GO_Central"/>
</dbReference>
<dbReference type="GO" id="GO:0051015">
    <property type="term" value="F:actin filament binding"/>
    <property type="evidence" value="ECO:0000318"/>
    <property type="project" value="GO_Central"/>
</dbReference>
<dbReference type="GO" id="GO:0046872">
    <property type="term" value="F:metal ion binding"/>
    <property type="evidence" value="ECO:0007669"/>
    <property type="project" value="UniProtKB-KW"/>
</dbReference>
<dbReference type="GO" id="GO:0006811">
    <property type="term" value="P:monoatomic ion transport"/>
    <property type="evidence" value="ECO:0007669"/>
    <property type="project" value="UniProtKB-KW"/>
</dbReference>
<dbReference type="CDD" id="cd09447">
    <property type="entry name" value="LIM_LASP"/>
    <property type="match status" value="1"/>
</dbReference>
<dbReference type="CDD" id="cd11934">
    <property type="entry name" value="SH3_Lasp1_C"/>
    <property type="match status" value="1"/>
</dbReference>
<dbReference type="FunFam" id="2.10.110.10:FF:000087">
    <property type="entry name" value="LIM zinc-binding domain-containing Nebulette"/>
    <property type="match status" value="1"/>
</dbReference>
<dbReference type="FunFam" id="2.30.30.40:FF:000007">
    <property type="entry name" value="nebulin isoform X1"/>
    <property type="match status" value="1"/>
</dbReference>
<dbReference type="Gene3D" id="2.10.110.10">
    <property type="entry name" value="Cysteine Rich Protein"/>
    <property type="match status" value="1"/>
</dbReference>
<dbReference type="Gene3D" id="2.30.30.40">
    <property type="entry name" value="SH3 Domains"/>
    <property type="match status" value="1"/>
</dbReference>
<dbReference type="InterPro" id="IPR035630">
    <property type="entry name" value="Lasp1_SH3"/>
</dbReference>
<dbReference type="InterPro" id="IPR051759">
    <property type="entry name" value="LIM-SH3_domain_protein"/>
</dbReference>
<dbReference type="InterPro" id="IPR000900">
    <property type="entry name" value="Nebulin_repeat"/>
</dbReference>
<dbReference type="InterPro" id="IPR036028">
    <property type="entry name" value="SH3-like_dom_sf"/>
</dbReference>
<dbReference type="InterPro" id="IPR001452">
    <property type="entry name" value="SH3_domain"/>
</dbReference>
<dbReference type="InterPro" id="IPR001781">
    <property type="entry name" value="Znf_LIM"/>
</dbReference>
<dbReference type="PANTHER" id="PTHR46218">
    <property type="entry name" value="LASP"/>
    <property type="match status" value="1"/>
</dbReference>
<dbReference type="PANTHER" id="PTHR46218:SF2">
    <property type="entry name" value="LIM AND SH3 DOMAIN PROTEIN 1"/>
    <property type="match status" value="1"/>
</dbReference>
<dbReference type="Pfam" id="PF00412">
    <property type="entry name" value="LIM"/>
    <property type="match status" value="1"/>
</dbReference>
<dbReference type="Pfam" id="PF00880">
    <property type="entry name" value="Nebulin"/>
    <property type="match status" value="2"/>
</dbReference>
<dbReference type="Pfam" id="PF14604">
    <property type="entry name" value="SH3_9"/>
    <property type="match status" value="1"/>
</dbReference>
<dbReference type="PRINTS" id="PR00452">
    <property type="entry name" value="SH3DOMAIN"/>
</dbReference>
<dbReference type="SMART" id="SM00132">
    <property type="entry name" value="LIM"/>
    <property type="match status" value="1"/>
</dbReference>
<dbReference type="SMART" id="SM00227">
    <property type="entry name" value="NEBU"/>
    <property type="match status" value="2"/>
</dbReference>
<dbReference type="SMART" id="SM00326">
    <property type="entry name" value="SH3"/>
    <property type="match status" value="1"/>
</dbReference>
<dbReference type="SUPFAM" id="SSF57716">
    <property type="entry name" value="Glucocorticoid receptor-like (DNA-binding domain)"/>
    <property type="match status" value="1"/>
</dbReference>
<dbReference type="SUPFAM" id="SSF50044">
    <property type="entry name" value="SH3-domain"/>
    <property type="match status" value="1"/>
</dbReference>
<dbReference type="PROSITE" id="PS00478">
    <property type="entry name" value="LIM_DOMAIN_1"/>
    <property type="match status" value="1"/>
</dbReference>
<dbReference type="PROSITE" id="PS50023">
    <property type="entry name" value="LIM_DOMAIN_2"/>
    <property type="match status" value="1"/>
</dbReference>
<dbReference type="PROSITE" id="PS51216">
    <property type="entry name" value="NEBULIN"/>
    <property type="match status" value="2"/>
</dbReference>
<dbReference type="PROSITE" id="PS50002">
    <property type="entry name" value="SH3"/>
    <property type="match status" value="1"/>
</dbReference>
<proteinExistence type="evidence at transcript level"/>
<organism>
    <name type="scientific">Bos taurus</name>
    <name type="common">Bovine</name>
    <dbReference type="NCBI Taxonomy" id="9913"/>
    <lineage>
        <taxon>Eukaryota</taxon>
        <taxon>Metazoa</taxon>
        <taxon>Chordata</taxon>
        <taxon>Craniata</taxon>
        <taxon>Vertebrata</taxon>
        <taxon>Euteleostomi</taxon>
        <taxon>Mammalia</taxon>
        <taxon>Eutheria</taxon>
        <taxon>Laurasiatheria</taxon>
        <taxon>Artiodactyla</taxon>
        <taxon>Ruminantia</taxon>
        <taxon>Pecora</taxon>
        <taxon>Bovidae</taxon>
        <taxon>Bovinae</taxon>
        <taxon>Bos</taxon>
    </lineage>
</organism>
<comment type="function">
    <text evidence="1">Plays an important role in the regulation of dynamic actin-based, cytoskeletal activities. Agonist-dependent changes in LASP1 phosphorylation may also serve to regulate actin-associated ion transport activities, not only in the parietal cell but also in certain other F-actin-rich secretory epithelial cell types (By similarity).</text>
</comment>
<comment type="subunit">
    <text evidence="1">Interacts with F-actin (By similarity). Interacts with ANKRD54. Interacts with KBTBD10 (By similarity).</text>
</comment>
<comment type="subcellular location">
    <subcellularLocation>
        <location evidence="1">Cytoplasm</location>
        <location evidence="1">Cell cortex</location>
    </subcellularLocation>
    <subcellularLocation>
        <location evidence="1">Cytoplasm</location>
        <location evidence="1">Cytoskeleton</location>
    </subcellularLocation>
    <text evidence="1">Associated with the F-actin rich cortical cytoskeleton.</text>
</comment>
<comment type="PTM">
    <text evidence="1">Phosphorylated.</text>
</comment>
<evidence type="ECO:0000250" key="1"/>
<evidence type="ECO:0000250" key="2">
    <source>
        <dbReference type="UniProtKB" id="Q14847"/>
    </source>
</evidence>
<evidence type="ECO:0000250" key="3">
    <source>
        <dbReference type="UniProtKB" id="Q61792"/>
    </source>
</evidence>
<evidence type="ECO:0000255" key="4">
    <source>
        <dbReference type="PROSITE-ProRule" id="PRU00125"/>
    </source>
</evidence>
<evidence type="ECO:0000255" key="5">
    <source>
        <dbReference type="PROSITE-ProRule" id="PRU00192"/>
    </source>
</evidence>
<evidence type="ECO:0000256" key="6">
    <source>
        <dbReference type="SAM" id="MobiDB-lite"/>
    </source>
</evidence>
<keyword id="KW-0007">Acetylation</keyword>
<keyword id="KW-0009">Actin-binding</keyword>
<keyword id="KW-0963">Cytoplasm</keyword>
<keyword id="KW-0206">Cytoskeleton</keyword>
<keyword id="KW-0406">Ion transport</keyword>
<keyword id="KW-0440">LIM domain</keyword>
<keyword id="KW-0479">Metal-binding</keyword>
<keyword id="KW-0488">Methylation</keyword>
<keyword id="KW-0597">Phosphoprotein</keyword>
<keyword id="KW-1185">Reference proteome</keyword>
<keyword id="KW-0677">Repeat</keyword>
<keyword id="KW-0728">SH3 domain</keyword>
<keyword id="KW-0813">Transport</keyword>
<keyword id="KW-0862">Zinc</keyword>
<gene>
    <name type="primary">LASP1</name>
</gene>
<name>LASP1_BOVIN</name>
<sequence length="260" mass="29677">MNPNCARCCKIVYPTEKVNCLDKFWHKACFHCETCKMTLNMKNYKGYEKKPYCNAHYPKQSFTMVADTPENLRLKQQSELQSQVRYKEEFEKNKGKGFSVVADTPELQRIKKTQDQISNIKYHEEFEKSRMGPSGGEGLECERRDPQESSYRRPQEQQQPHHIPASTPVYQQPQQQPAAQSYGGYKEPAAPASIQRSAPGGGGKRYRAVYDYSAADEDEVSFQDGDTIVNVQQIDDGWMYGTVERTGDTGMLPANYVEAI</sequence>
<reference key="1">
    <citation type="submission" date="2005-10" db="EMBL/GenBank/DDBJ databases">
        <authorList>
            <consortium name="NIH - Mammalian Gene Collection (MGC) project"/>
        </authorList>
    </citation>
    <scope>NUCLEOTIDE SEQUENCE [LARGE SCALE MRNA]</scope>
    <source>
        <strain>Hereford</strain>
        <tissue>Reticulocyte</tissue>
    </source>
</reference>
<accession>Q3B7M5</accession>
<feature type="chain" id="PRO_0000223474" description="LIM and SH3 domain protein 1">
    <location>
        <begin position="1"/>
        <end position="260"/>
    </location>
</feature>
<feature type="domain" description="LIM zinc-binding" evidence="4">
    <location>
        <begin position="5"/>
        <end position="56"/>
    </location>
</feature>
<feature type="repeat" description="Nebulin 1">
    <location>
        <begin position="61"/>
        <end position="95"/>
    </location>
</feature>
<feature type="repeat" description="Nebulin 2">
    <location>
        <begin position="97"/>
        <end position="131"/>
    </location>
</feature>
<feature type="domain" description="SH3" evidence="5">
    <location>
        <begin position="201"/>
        <end position="260"/>
    </location>
</feature>
<feature type="region of interest" description="Disordered" evidence="6">
    <location>
        <begin position="123"/>
        <end position="204"/>
    </location>
</feature>
<feature type="compositionally biased region" description="Basic and acidic residues" evidence="6">
    <location>
        <begin position="140"/>
        <end position="155"/>
    </location>
</feature>
<feature type="compositionally biased region" description="Low complexity" evidence="6">
    <location>
        <begin position="171"/>
        <end position="180"/>
    </location>
</feature>
<feature type="modified residue" description="N-acetylmethionine" evidence="2">
    <location>
        <position position="1"/>
    </location>
</feature>
<feature type="modified residue" description="N6-acetyllysine" evidence="2">
    <location>
        <position position="42"/>
    </location>
</feature>
<feature type="modified residue" description="Phosphothreonine" evidence="2">
    <location>
        <position position="68"/>
    </location>
</feature>
<feature type="modified residue" description="N6-methyllysine" evidence="2">
    <location>
        <position position="75"/>
    </location>
</feature>
<feature type="modified residue" description="Phosphoserine" evidence="2">
    <location>
        <position position="99"/>
    </location>
</feature>
<feature type="modified residue" description="Phosphothreonine" evidence="2">
    <location>
        <position position="104"/>
    </location>
</feature>
<feature type="modified residue" description="N6-succinyllysine" evidence="3">
    <location>
        <position position="112"/>
    </location>
</feature>
<feature type="modified residue" description="Phosphoserine" evidence="2">
    <location>
        <position position="118"/>
    </location>
</feature>
<feature type="modified residue" description="Phosphoserine" evidence="2">
    <location>
        <position position="134"/>
    </location>
</feature>
<protein>
    <recommendedName>
        <fullName>LIM and SH3 domain protein 1</fullName>
        <shortName>LASP-1</shortName>
    </recommendedName>
</protein>